<dbReference type="EC" id="6.3.5.2" evidence="1"/>
<dbReference type="EMBL" id="CP001078">
    <property type="protein sequence ID" value="ACD52650.1"/>
    <property type="molecule type" value="Genomic_DNA"/>
</dbReference>
<dbReference type="RefSeq" id="WP_012450748.1">
    <property type="nucleotide sequence ID" value="NC_010723.1"/>
</dbReference>
<dbReference type="SMR" id="B2UZ05"/>
<dbReference type="MEROPS" id="C26.957"/>
<dbReference type="KEGG" id="cbt:CLH_0377"/>
<dbReference type="HOGENOM" id="CLU_014340_0_5_9"/>
<dbReference type="UniPathway" id="UPA00189">
    <property type="reaction ID" value="UER00296"/>
</dbReference>
<dbReference type="GO" id="GO:0005829">
    <property type="term" value="C:cytosol"/>
    <property type="evidence" value="ECO:0007669"/>
    <property type="project" value="TreeGrafter"/>
</dbReference>
<dbReference type="GO" id="GO:0005524">
    <property type="term" value="F:ATP binding"/>
    <property type="evidence" value="ECO:0007669"/>
    <property type="project" value="UniProtKB-UniRule"/>
</dbReference>
<dbReference type="GO" id="GO:0003921">
    <property type="term" value="F:GMP synthase activity"/>
    <property type="evidence" value="ECO:0007669"/>
    <property type="project" value="InterPro"/>
</dbReference>
<dbReference type="CDD" id="cd01742">
    <property type="entry name" value="GATase1_GMP_Synthase"/>
    <property type="match status" value="1"/>
</dbReference>
<dbReference type="CDD" id="cd01997">
    <property type="entry name" value="GMP_synthase_C"/>
    <property type="match status" value="1"/>
</dbReference>
<dbReference type="FunFam" id="3.30.300.10:FF:000002">
    <property type="entry name" value="GMP synthase [glutamine-hydrolyzing]"/>
    <property type="match status" value="1"/>
</dbReference>
<dbReference type="FunFam" id="3.40.50.620:FF:000001">
    <property type="entry name" value="GMP synthase [glutamine-hydrolyzing]"/>
    <property type="match status" value="1"/>
</dbReference>
<dbReference type="FunFam" id="3.40.50.880:FF:000001">
    <property type="entry name" value="GMP synthase [glutamine-hydrolyzing]"/>
    <property type="match status" value="1"/>
</dbReference>
<dbReference type="Gene3D" id="3.30.300.10">
    <property type="match status" value="1"/>
</dbReference>
<dbReference type="Gene3D" id="3.40.50.880">
    <property type="match status" value="1"/>
</dbReference>
<dbReference type="Gene3D" id="3.40.50.620">
    <property type="entry name" value="HUPs"/>
    <property type="match status" value="1"/>
</dbReference>
<dbReference type="HAMAP" id="MF_00344">
    <property type="entry name" value="GMP_synthase"/>
    <property type="match status" value="1"/>
</dbReference>
<dbReference type="InterPro" id="IPR029062">
    <property type="entry name" value="Class_I_gatase-like"/>
</dbReference>
<dbReference type="InterPro" id="IPR017926">
    <property type="entry name" value="GATASE"/>
</dbReference>
<dbReference type="InterPro" id="IPR001674">
    <property type="entry name" value="GMP_synth_C"/>
</dbReference>
<dbReference type="InterPro" id="IPR004739">
    <property type="entry name" value="GMP_synth_GATase"/>
</dbReference>
<dbReference type="InterPro" id="IPR022955">
    <property type="entry name" value="GMP_synthase"/>
</dbReference>
<dbReference type="InterPro" id="IPR025777">
    <property type="entry name" value="GMPS_ATP_PPase_dom"/>
</dbReference>
<dbReference type="InterPro" id="IPR014729">
    <property type="entry name" value="Rossmann-like_a/b/a_fold"/>
</dbReference>
<dbReference type="NCBIfam" id="TIGR00884">
    <property type="entry name" value="guaA_Cterm"/>
    <property type="match status" value="1"/>
</dbReference>
<dbReference type="NCBIfam" id="TIGR00888">
    <property type="entry name" value="guaA_Nterm"/>
    <property type="match status" value="1"/>
</dbReference>
<dbReference type="NCBIfam" id="NF000848">
    <property type="entry name" value="PRK00074.1"/>
    <property type="match status" value="1"/>
</dbReference>
<dbReference type="PANTHER" id="PTHR11922:SF2">
    <property type="entry name" value="GMP SYNTHASE [GLUTAMINE-HYDROLYZING]"/>
    <property type="match status" value="1"/>
</dbReference>
<dbReference type="PANTHER" id="PTHR11922">
    <property type="entry name" value="GMP SYNTHASE-RELATED"/>
    <property type="match status" value="1"/>
</dbReference>
<dbReference type="Pfam" id="PF00117">
    <property type="entry name" value="GATase"/>
    <property type="match status" value="1"/>
</dbReference>
<dbReference type="Pfam" id="PF00958">
    <property type="entry name" value="GMP_synt_C"/>
    <property type="match status" value="1"/>
</dbReference>
<dbReference type="Pfam" id="PF03054">
    <property type="entry name" value="tRNA_Me_trans"/>
    <property type="match status" value="1"/>
</dbReference>
<dbReference type="PRINTS" id="PR00099">
    <property type="entry name" value="CPSGATASE"/>
</dbReference>
<dbReference type="PRINTS" id="PR00096">
    <property type="entry name" value="GATASE"/>
</dbReference>
<dbReference type="SUPFAM" id="SSF52402">
    <property type="entry name" value="Adenine nucleotide alpha hydrolases-like"/>
    <property type="match status" value="1"/>
</dbReference>
<dbReference type="SUPFAM" id="SSF52317">
    <property type="entry name" value="Class I glutamine amidotransferase-like"/>
    <property type="match status" value="1"/>
</dbReference>
<dbReference type="SUPFAM" id="SSF54810">
    <property type="entry name" value="GMP synthetase C-terminal dimerisation domain"/>
    <property type="match status" value="1"/>
</dbReference>
<dbReference type="PROSITE" id="PS51273">
    <property type="entry name" value="GATASE_TYPE_1"/>
    <property type="match status" value="1"/>
</dbReference>
<dbReference type="PROSITE" id="PS51553">
    <property type="entry name" value="GMPS_ATP_PPASE"/>
    <property type="match status" value="1"/>
</dbReference>
<proteinExistence type="inferred from homology"/>
<evidence type="ECO:0000255" key="1">
    <source>
        <dbReference type="HAMAP-Rule" id="MF_00344"/>
    </source>
</evidence>
<comment type="function">
    <text evidence="1">Catalyzes the synthesis of GMP from XMP.</text>
</comment>
<comment type="catalytic activity">
    <reaction evidence="1">
        <text>XMP + L-glutamine + ATP + H2O = GMP + L-glutamate + AMP + diphosphate + 2 H(+)</text>
        <dbReference type="Rhea" id="RHEA:11680"/>
        <dbReference type="ChEBI" id="CHEBI:15377"/>
        <dbReference type="ChEBI" id="CHEBI:15378"/>
        <dbReference type="ChEBI" id="CHEBI:29985"/>
        <dbReference type="ChEBI" id="CHEBI:30616"/>
        <dbReference type="ChEBI" id="CHEBI:33019"/>
        <dbReference type="ChEBI" id="CHEBI:57464"/>
        <dbReference type="ChEBI" id="CHEBI:58115"/>
        <dbReference type="ChEBI" id="CHEBI:58359"/>
        <dbReference type="ChEBI" id="CHEBI:456215"/>
        <dbReference type="EC" id="6.3.5.2"/>
    </reaction>
</comment>
<comment type="pathway">
    <text evidence="1">Purine metabolism; GMP biosynthesis; GMP from XMP (L-Gln route): step 1/1.</text>
</comment>
<comment type="subunit">
    <text evidence="1">Homodimer.</text>
</comment>
<keyword id="KW-0067">ATP-binding</keyword>
<keyword id="KW-0315">Glutamine amidotransferase</keyword>
<keyword id="KW-0332">GMP biosynthesis</keyword>
<keyword id="KW-0436">Ligase</keyword>
<keyword id="KW-0547">Nucleotide-binding</keyword>
<keyword id="KW-0658">Purine biosynthesis</keyword>
<organism>
    <name type="scientific">Clostridium botulinum (strain Alaska E43 / Type E3)</name>
    <dbReference type="NCBI Taxonomy" id="508767"/>
    <lineage>
        <taxon>Bacteria</taxon>
        <taxon>Bacillati</taxon>
        <taxon>Bacillota</taxon>
        <taxon>Clostridia</taxon>
        <taxon>Eubacteriales</taxon>
        <taxon>Clostridiaceae</taxon>
        <taxon>Clostridium</taxon>
    </lineage>
</organism>
<name>GUAA_CLOBA</name>
<reference key="1">
    <citation type="submission" date="2008-05" db="EMBL/GenBank/DDBJ databases">
        <title>Complete genome sequence of Clostridium botulinum E3 str. Alaska E43.</title>
        <authorList>
            <person name="Brinkac L.M."/>
            <person name="Brown J.L."/>
            <person name="Bruce D."/>
            <person name="Detter C."/>
            <person name="Munk C."/>
            <person name="Smith L.A."/>
            <person name="Smith T.J."/>
            <person name="Sutton G."/>
            <person name="Brettin T.S."/>
        </authorList>
    </citation>
    <scope>NUCLEOTIDE SEQUENCE [LARGE SCALE GENOMIC DNA]</scope>
    <source>
        <strain>Alaska E43 / Type E3</strain>
    </source>
</reference>
<gene>
    <name evidence="1" type="primary">guaA</name>
    <name type="ordered locus">CLH_0377</name>
</gene>
<accession>B2UZ05</accession>
<protein>
    <recommendedName>
        <fullName evidence="1">GMP synthase [glutamine-hydrolyzing]</fullName>
        <ecNumber evidence="1">6.3.5.2</ecNumber>
    </recommendedName>
    <alternativeName>
        <fullName evidence="1">GMP synthetase</fullName>
    </alternativeName>
    <alternativeName>
        <fullName evidence="1">Glutamine amidotransferase</fullName>
    </alternativeName>
</protein>
<sequence>MKRDLVLVIDFGGQYNQLIARRVRECNVYCEVHPYNLSVDEIKQMNPKGIIFTGGPNSVYGENSPLCDKAIFELGVPIFGICYGSQLMSHMLGGKVATAPVSEYGKTKVDVNIESKLFEGVSSSTICWMSHTDYIEKAPEGFKVIGKTPVCPVAAMECEDKNLYAVQFHPEVMHTEEGTKMLSNFVYNICGCTGDWKMDSFVEKTIEEVRQKVGNGKVLCALSGGVDSSVAAVLLSRAVGKQLTCVFVDHGLLRKNEGDEVEEIFGPNGQYDLNFIRVNAQERFYEKLAGIEEPEQKRKIIGEEFIRVFEEEAKKIGTVDYLVQGTIYPDVIESGLGKSAVIKSHHNVGGLPDYVDFKEIIEPLRLLFKDEVRKAGLELGIPEKLVFRQPFPGPGLGIRIIGEVTAEKVKIVQDADAIYREEIANAGIDKEIGQYFAALTNMRSVGVMGDERTYDYAIALRAVTTSDFMTAESADLPWEVLGKVTTRIVNEVKGVNRVMYDCTGKPPATIEFE</sequence>
<feature type="chain" id="PRO_1000205293" description="GMP synthase [glutamine-hydrolyzing]">
    <location>
        <begin position="1"/>
        <end position="513"/>
    </location>
</feature>
<feature type="domain" description="Glutamine amidotransferase type-1" evidence="1">
    <location>
        <begin position="5"/>
        <end position="195"/>
    </location>
</feature>
<feature type="domain" description="GMPS ATP-PPase" evidence="1">
    <location>
        <begin position="196"/>
        <end position="388"/>
    </location>
</feature>
<feature type="active site" description="Nucleophile" evidence="1">
    <location>
        <position position="82"/>
    </location>
</feature>
<feature type="active site" evidence="1">
    <location>
        <position position="169"/>
    </location>
</feature>
<feature type="active site" evidence="1">
    <location>
        <position position="171"/>
    </location>
</feature>
<feature type="binding site" evidence="1">
    <location>
        <begin position="223"/>
        <end position="229"/>
    </location>
    <ligand>
        <name>ATP</name>
        <dbReference type="ChEBI" id="CHEBI:30616"/>
    </ligand>
</feature>